<proteinExistence type="evidence at transcript level"/>
<accession>Q71QH7</accession>
<keyword id="KW-1015">Disulfide bond</keyword>
<keyword id="KW-0325">Glycoprotein</keyword>
<keyword id="KW-1199">Hemostasis impairing toxin</keyword>
<keyword id="KW-0378">Hydrolase</keyword>
<keyword id="KW-0645">Protease</keyword>
<keyword id="KW-0964">Secreted</keyword>
<keyword id="KW-0720">Serine protease</keyword>
<keyword id="KW-0732">Signal</keyword>
<keyword id="KW-0800">Toxin</keyword>
<keyword id="KW-0865">Zymogen</keyword>
<feature type="signal peptide" evidence="2">
    <location>
        <begin position="1"/>
        <end position="18"/>
    </location>
</feature>
<feature type="propeptide" id="PRO_0000295839" evidence="1">
    <location>
        <begin position="19"/>
        <end position="24"/>
    </location>
</feature>
<feature type="chain" id="PRO_5000061232" description="Snake venom serine protease PA">
    <location>
        <begin position="25"/>
        <end position="258"/>
    </location>
</feature>
<feature type="domain" description="Peptidase S1" evidence="3">
    <location>
        <begin position="25"/>
        <end position="249"/>
    </location>
</feature>
<feature type="active site" description="Charge relay system" evidence="1">
    <location>
        <position position="65"/>
    </location>
</feature>
<feature type="active site" description="Charge relay system" evidence="1">
    <location>
        <position position="110"/>
    </location>
</feature>
<feature type="active site" description="Charge relay system" evidence="1">
    <location>
        <position position="204"/>
    </location>
</feature>
<feature type="glycosylation site" description="N-linked (GlcNAc...) asparagine" evidence="2">
    <location>
        <position position="44"/>
    </location>
</feature>
<feature type="disulfide bond" evidence="3">
    <location>
        <begin position="31"/>
        <end position="163"/>
    </location>
</feature>
<feature type="disulfide bond" evidence="3">
    <location>
        <begin position="50"/>
        <end position="66"/>
    </location>
</feature>
<feature type="disulfide bond" evidence="3">
    <location>
        <begin position="98"/>
        <end position="256"/>
    </location>
</feature>
<feature type="disulfide bond" evidence="3">
    <location>
        <begin position="142"/>
        <end position="210"/>
    </location>
</feature>
<feature type="disulfide bond" evidence="3">
    <location>
        <begin position="174"/>
        <end position="189"/>
    </location>
</feature>
<feature type="disulfide bond" evidence="3">
    <location>
        <begin position="200"/>
        <end position="225"/>
    </location>
</feature>
<evidence type="ECO:0000250" key="1"/>
<evidence type="ECO:0000255" key="2"/>
<evidence type="ECO:0000255" key="3">
    <source>
        <dbReference type="PROSITE-ProRule" id="PRU00274"/>
    </source>
</evidence>
<dbReference type="EC" id="3.4.21.-"/>
<dbReference type="EMBL" id="AF395780">
    <property type="protein sequence ID" value="AAQ02910.1"/>
    <property type="molecule type" value="mRNA"/>
</dbReference>
<dbReference type="SMR" id="Q71QH7"/>
<dbReference type="MEROPS" id="S01.347"/>
<dbReference type="GO" id="GO:0005576">
    <property type="term" value="C:extracellular region"/>
    <property type="evidence" value="ECO:0007669"/>
    <property type="project" value="UniProtKB-SubCell"/>
</dbReference>
<dbReference type="GO" id="GO:0030141">
    <property type="term" value="C:secretory granule"/>
    <property type="evidence" value="ECO:0007669"/>
    <property type="project" value="TreeGrafter"/>
</dbReference>
<dbReference type="GO" id="GO:0004252">
    <property type="term" value="F:serine-type endopeptidase activity"/>
    <property type="evidence" value="ECO:0007669"/>
    <property type="project" value="InterPro"/>
</dbReference>
<dbReference type="GO" id="GO:0090729">
    <property type="term" value="F:toxin activity"/>
    <property type="evidence" value="ECO:0007669"/>
    <property type="project" value="UniProtKB-KW"/>
</dbReference>
<dbReference type="GO" id="GO:0006508">
    <property type="term" value="P:proteolysis"/>
    <property type="evidence" value="ECO:0007669"/>
    <property type="project" value="UniProtKB-KW"/>
</dbReference>
<dbReference type="CDD" id="cd00190">
    <property type="entry name" value="Tryp_SPc"/>
    <property type="match status" value="1"/>
</dbReference>
<dbReference type="FunFam" id="2.40.10.10:FF:000158">
    <property type="entry name" value="Thrombin-like enzyme saxthrombin"/>
    <property type="match status" value="1"/>
</dbReference>
<dbReference type="FunFam" id="2.40.10.10:FF:000153">
    <property type="entry name" value="Venom plasminogen activator TSV-PA"/>
    <property type="match status" value="1"/>
</dbReference>
<dbReference type="Gene3D" id="2.40.10.10">
    <property type="entry name" value="Trypsin-like serine proteases"/>
    <property type="match status" value="2"/>
</dbReference>
<dbReference type="InterPro" id="IPR009003">
    <property type="entry name" value="Peptidase_S1_PA"/>
</dbReference>
<dbReference type="InterPro" id="IPR043504">
    <property type="entry name" value="Peptidase_S1_PA_chymotrypsin"/>
</dbReference>
<dbReference type="InterPro" id="IPR001314">
    <property type="entry name" value="Peptidase_S1A"/>
</dbReference>
<dbReference type="InterPro" id="IPR001254">
    <property type="entry name" value="Trypsin_dom"/>
</dbReference>
<dbReference type="InterPro" id="IPR018114">
    <property type="entry name" value="TRYPSIN_HIS"/>
</dbReference>
<dbReference type="InterPro" id="IPR033116">
    <property type="entry name" value="TRYPSIN_SER"/>
</dbReference>
<dbReference type="PANTHER" id="PTHR24271:SF47">
    <property type="entry name" value="KALLIKREIN-1"/>
    <property type="match status" value="1"/>
</dbReference>
<dbReference type="PANTHER" id="PTHR24271">
    <property type="entry name" value="KALLIKREIN-RELATED"/>
    <property type="match status" value="1"/>
</dbReference>
<dbReference type="Pfam" id="PF00089">
    <property type="entry name" value="Trypsin"/>
    <property type="match status" value="1"/>
</dbReference>
<dbReference type="PRINTS" id="PR00722">
    <property type="entry name" value="CHYMOTRYPSIN"/>
</dbReference>
<dbReference type="SMART" id="SM00020">
    <property type="entry name" value="Tryp_SPc"/>
    <property type="match status" value="1"/>
</dbReference>
<dbReference type="SUPFAM" id="SSF50494">
    <property type="entry name" value="Trypsin-like serine proteases"/>
    <property type="match status" value="1"/>
</dbReference>
<dbReference type="PROSITE" id="PS50240">
    <property type="entry name" value="TRYPSIN_DOM"/>
    <property type="match status" value="1"/>
</dbReference>
<dbReference type="PROSITE" id="PS00134">
    <property type="entry name" value="TRYPSIN_HIS"/>
    <property type="match status" value="1"/>
</dbReference>
<dbReference type="PROSITE" id="PS00135">
    <property type="entry name" value="TRYPSIN_SER"/>
    <property type="match status" value="1"/>
</dbReference>
<sequence>MVLIRVLANLLILQLSYAQKSPELVVGGDECNINEHRSLVAIFNSTGFFCSGTLINQEWVVTAAHCDSNNFKMKFGAHSQKVLNEDEQIRNPKEKFICPNKKNNEVLDKDIMLIKLDSSVSNSEHIAPLSLPSSPPSVGSVCRIMGWGSITPTKVTYPDVPYCANINLLDDAECKPGYPELLPEYRTLCAGIVQGGKDTCGGDSGGPLICNGQFHGIVSYGAHPCGQSLKPGIYTTVFDYNDWIKSIIAGNTAATCPP</sequence>
<reference key="1">
    <citation type="submission" date="2001-06" db="EMBL/GenBank/DDBJ databases">
        <title>Identification of geographic variations and cloning of venom proteins of Trimeresurus stejnegeri: serine proteases and phospholipases.</title>
        <authorList>
            <person name="Tsai I.-H."/>
            <person name="Wang Y.-M."/>
        </authorList>
    </citation>
    <scope>NUCLEOTIDE SEQUENCE [MRNA]</scope>
    <source>
        <tissue>Venom gland</tissue>
    </source>
</reference>
<protein>
    <recommendedName>
        <fullName>Snake venom serine protease PA</fullName>
        <shortName>SVSP</shortName>
        <ecNumber>3.4.21.-</ecNumber>
    </recommendedName>
</protein>
<name>VSPP_TRIST</name>
<organism>
    <name type="scientific">Trimeresurus stejnegeri</name>
    <name type="common">Chinese green tree viper</name>
    <name type="synonym">Viridovipera stejnegeri</name>
    <dbReference type="NCBI Taxonomy" id="39682"/>
    <lineage>
        <taxon>Eukaryota</taxon>
        <taxon>Metazoa</taxon>
        <taxon>Chordata</taxon>
        <taxon>Craniata</taxon>
        <taxon>Vertebrata</taxon>
        <taxon>Euteleostomi</taxon>
        <taxon>Lepidosauria</taxon>
        <taxon>Squamata</taxon>
        <taxon>Bifurcata</taxon>
        <taxon>Unidentata</taxon>
        <taxon>Episquamata</taxon>
        <taxon>Toxicofera</taxon>
        <taxon>Serpentes</taxon>
        <taxon>Colubroidea</taxon>
        <taxon>Viperidae</taxon>
        <taxon>Crotalinae</taxon>
        <taxon>Trimeresurus</taxon>
    </lineage>
</organism>
<comment type="function">
    <text evidence="1">Snake venom serine protease that may act in the hemostasis system of the prey.</text>
</comment>
<comment type="subunit">
    <text evidence="1">Monomer.</text>
</comment>
<comment type="subcellular location">
    <subcellularLocation>
        <location evidence="1">Secreted</location>
    </subcellularLocation>
</comment>
<comment type="tissue specificity">
    <text>Expressed by the venom gland.</text>
</comment>
<comment type="similarity">
    <text evidence="3">Belongs to the peptidase S1 family. Snake venom subfamily.</text>
</comment>